<protein>
    <recommendedName>
        <fullName>Toxin Td1</fullName>
    </recommendedName>
    <alternativeName>
        <fullName>PT-beta* NaTx13.1</fullName>
    </alternativeName>
</protein>
<keyword id="KW-0027">Amidation</keyword>
<keyword id="KW-1015">Disulfide bond</keyword>
<keyword id="KW-0872">Ion channel impairing toxin</keyword>
<keyword id="KW-0528">Neurotoxin</keyword>
<keyword id="KW-0964">Secreted</keyword>
<keyword id="KW-0732">Signal</keyword>
<keyword id="KW-0800">Toxin</keyword>
<keyword id="KW-0738">Voltage-gated sodium channel impairing toxin</keyword>
<evidence type="ECO:0000250" key="1"/>
<evidence type="ECO:0000255" key="2">
    <source>
        <dbReference type="PROSITE-ProRule" id="PRU01210"/>
    </source>
</evidence>
<evidence type="ECO:0000269" key="3">
    <source>
    </source>
</evidence>
<evidence type="ECO:0000305" key="4"/>
<comment type="function">
    <text evidence="1">Beta toxins bind voltage-independently at site-4 of sodium channels (Nav) and shift the voltage of activation toward more negative potentials thereby affecting sodium channel activation and promoting spontaneous and repetitive firing.</text>
</comment>
<comment type="subcellular location">
    <subcellularLocation>
        <location>Secreted</location>
    </subcellularLocation>
</comment>
<comment type="tissue specificity">
    <text>Expressed by the venom gland.</text>
</comment>
<comment type="domain">
    <text evidence="4">Has the structural arrangement of an alpha-helix connected to antiparallel beta-sheets by disulfide bonds (CS-alpha/beta).</text>
</comment>
<comment type="mass spectrometry"/>
<comment type="similarity">
    <text evidence="4">Belongs to the long (4 C-C) scorpion toxin superfamily. Sodium channel inhibitor family. Beta subfamily.</text>
</comment>
<dbReference type="EMBL" id="FN392274">
    <property type="protein sequence ID" value="CAY61920.1"/>
    <property type="molecule type" value="mRNA"/>
</dbReference>
<dbReference type="EMBL" id="DQ075226">
    <property type="protein sequence ID" value="AAZ29705.1"/>
    <property type="molecule type" value="mRNA"/>
</dbReference>
<dbReference type="SMR" id="Q1I180"/>
<dbReference type="GO" id="GO:0005576">
    <property type="term" value="C:extracellular region"/>
    <property type="evidence" value="ECO:0007669"/>
    <property type="project" value="UniProtKB-SubCell"/>
</dbReference>
<dbReference type="GO" id="GO:0019871">
    <property type="term" value="F:sodium channel inhibitor activity"/>
    <property type="evidence" value="ECO:0007669"/>
    <property type="project" value="InterPro"/>
</dbReference>
<dbReference type="GO" id="GO:0090729">
    <property type="term" value="F:toxin activity"/>
    <property type="evidence" value="ECO:0007669"/>
    <property type="project" value="UniProtKB-KW"/>
</dbReference>
<dbReference type="CDD" id="cd23106">
    <property type="entry name" value="neurotoxins_LC_scorpion"/>
    <property type="match status" value="1"/>
</dbReference>
<dbReference type="FunFam" id="3.30.30.10:FF:000002">
    <property type="entry name" value="Alpha-like toxin BmK-M1"/>
    <property type="match status" value="1"/>
</dbReference>
<dbReference type="Gene3D" id="3.30.30.10">
    <property type="entry name" value="Knottin, scorpion toxin-like"/>
    <property type="match status" value="1"/>
</dbReference>
<dbReference type="InterPro" id="IPR044062">
    <property type="entry name" value="LCN-type_CS_alpha_beta_dom"/>
</dbReference>
<dbReference type="InterPro" id="IPR036574">
    <property type="entry name" value="Scorpion_toxin-like_sf"/>
</dbReference>
<dbReference type="InterPro" id="IPR018218">
    <property type="entry name" value="Scorpion_toxinL"/>
</dbReference>
<dbReference type="InterPro" id="IPR002061">
    <property type="entry name" value="Scorpion_toxinL/defensin"/>
</dbReference>
<dbReference type="Pfam" id="PF00537">
    <property type="entry name" value="Toxin_3"/>
    <property type="match status" value="1"/>
</dbReference>
<dbReference type="PRINTS" id="PR00285">
    <property type="entry name" value="SCORPNTOXIN"/>
</dbReference>
<dbReference type="SUPFAM" id="SSF57095">
    <property type="entry name" value="Scorpion toxin-like"/>
    <property type="match status" value="1"/>
</dbReference>
<dbReference type="PROSITE" id="PS51863">
    <property type="entry name" value="LCN_CSAB"/>
    <property type="match status" value="1"/>
</dbReference>
<proteinExistence type="evidence at protein level"/>
<name>SCX1_TITDI</name>
<feature type="signal peptide">
    <location>
        <begin position="1"/>
        <end position="20"/>
    </location>
</feature>
<feature type="chain" id="PRO_0000253764" description="Toxin Td1">
    <location>
        <begin position="21"/>
        <end position="84"/>
    </location>
</feature>
<feature type="domain" description="LCN-type CS-alpha/beta" evidence="2">
    <location>
        <begin position="21"/>
        <end position="83"/>
    </location>
</feature>
<feature type="modified residue" description="Lysine amide" evidence="1">
    <location>
        <position position="84"/>
    </location>
</feature>
<feature type="disulfide bond" evidence="2">
    <location>
        <begin position="31"/>
        <end position="82"/>
    </location>
</feature>
<feature type="disulfide bond" evidence="2">
    <location>
        <begin position="35"/>
        <end position="57"/>
    </location>
</feature>
<feature type="disulfide bond" evidence="2">
    <location>
        <begin position="43"/>
        <end position="63"/>
    </location>
</feature>
<feature type="disulfide bond" evidence="2">
    <location>
        <begin position="47"/>
        <end position="65"/>
    </location>
</feature>
<sequence>MIRFILFISCFFLIGMVIECKDGYLMEPNGCKRGCLTRPARYCPNECSRLKGKDGYCYLWLACYCYNMPESAPVWERATNRCGKGK</sequence>
<accession>Q1I180</accession>
<accession>C9X4J6</accession>
<reference key="1">
    <citation type="journal article" date="2009" name="Biochimie">
        <title>Molecular cloning and nucleotide sequence analysis of genes from a cDNA library of the scorpion Tityus discrepans.</title>
        <authorList>
            <person name="D'Suze G."/>
            <person name="Schwartz E.F."/>
            <person name="Garcia-Gomez B.I."/>
            <person name="Sevcik C."/>
            <person name="Possani L.D."/>
        </authorList>
    </citation>
    <scope>NUCLEOTIDE SEQUENCE [MRNA]</scope>
    <source>
        <tissue>Venom gland</tissue>
    </source>
</reference>
<reference key="2">
    <citation type="journal article" date="2006" name="Comp. Biochem. Physiol.">
        <title>Diversity of long-chain toxins in Tityus zulianus and Tityus discrepans venoms (Scorpiones, Buthidae): molecular, immunological, and mass spectral analyses.</title>
        <authorList>
            <person name="Borges A."/>
            <person name="Garcia C.C."/>
            <person name="Lugo E."/>
            <person name="Alfonzo M.J."/>
            <person name="Jowers M.J."/>
            <person name="Op den Camp H.J.M."/>
        </authorList>
    </citation>
    <scope>NUCLEOTIDE SEQUENCE [MRNA] OF 14-86</scope>
    <scope>MASS SPECTROMETRY</scope>
    <source>
        <tissue>Venom</tissue>
        <tissue>Venom gland</tissue>
    </source>
</reference>
<reference key="3">
    <citation type="journal article" date="2012" name="PLoS ONE">
        <title>Identification and phylogenetic analysis of Tityus pachyurus and Tityus obscurus novel putative Na+-channel scorpion toxins.</title>
        <authorList>
            <person name="Guerrero-Vargas J.A."/>
            <person name="Mourao C.B."/>
            <person name="Quintero-Hernandez V."/>
            <person name="Possani L.D."/>
            <person name="Schwartz E.F."/>
        </authorList>
    </citation>
    <scope>NOMENCLATURE</scope>
</reference>
<organism>
    <name type="scientific">Tityus discrepans</name>
    <name type="common">Venezuelan scorpion</name>
    <dbReference type="NCBI Taxonomy" id="57059"/>
    <lineage>
        <taxon>Eukaryota</taxon>
        <taxon>Metazoa</taxon>
        <taxon>Ecdysozoa</taxon>
        <taxon>Arthropoda</taxon>
        <taxon>Chelicerata</taxon>
        <taxon>Arachnida</taxon>
        <taxon>Scorpiones</taxon>
        <taxon>Buthida</taxon>
        <taxon>Buthoidea</taxon>
        <taxon>Buthidae</taxon>
        <taxon>Tityus</taxon>
    </lineage>
</organism>